<dbReference type="EMBL" id="AJ252064">
    <property type="protein sequence ID" value="CAC19848.1"/>
    <property type="molecule type" value="mRNA"/>
</dbReference>
<dbReference type="EMBL" id="AB015478">
    <property type="protein sequence ID" value="BAB11046.1"/>
    <property type="molecule type" value="Genomic_DNA"/>
</dbReference>
<dbReference type="EMBL" id="CP002688">
    <property type="protein sequence ID" value="AED96154.1"/>
    <property type="molecule type" value="Genomic_DNA"/>
</dbReference>
<dbReference type="EMBL" id="CP002688">
    <property type="protein sequence ID" value="AED96155.2"/>
    <property type="molecule type" value="Genomic_DNA"/>
</dbReference>
<dbReference type="EMBL" id="BX831861">
    <property type="status" value="NOT_ANNOTATED_CDS"/>
    <property type="molecule type" value="mRNA"/>
</dbReference>
<dbReference type="RefSeq" id="NP_001318784.1">
    <molecule id="Q9FNZ1-2"/>
    <property type="nucleotide sequence ID" value="NM_001344972.1"/>
</dbReference>
<dbReference type="RefSeq" id="NP_200011.1">
    <molecule id="Q9FNZ1-2"/>
    <property type="nucleotide sequence ID" value="NM_124577.4"/>
</dbReference>
<dbReference type="SMR" id="Q9FNZ1"/>
<dbReference type="BioGRID" id="20518">
    <property type="interactions" value="7"/>
</dbReference>
<dbReference type="FunCoup" id="Q9FNZ1">
    <property type="interactions" value="1039"/>
</dbReference>
<dbReference type="IntAct" id="Q9FNZ1">
    <property type="interactions" value="8"/>
</dbReference>
<dbReference type="STRING" id="3702.Q9FNZ1"/>
<dbReference type="PaxDb" id="3702-AT5G51980.2"/>
<dbReference type="ProteomicsDB" id="240385">
    <molecule id="Q9FNZ1-1"/>
</dbReference>
<dbReference type="EnsemblPlants" id="AT5G51980.1">
    <molecule id="Q9FNZ1-2"/>
    <property type="protein sequence ID" value="AT5G51980.1"/>
    <property type="gene ID" value="AT5G51980"/>
</dbReference>
<dbReference type="EnsemblPlants" id="AT5G51980.2">
    <molecule id="Q9FNZ1-2"/>
    <property type="protein sequence ID" value="AT5G51980.2"/>
    <property type="gene ID" value="AT5G51980"/>
</dbReference>
<dbReference type="GeneID" id="835273"/>
<dbReference type="Gramene" id="AT5G51980.1">
    <molecule id="Q9FNZ1-2"/>
    <property type="protein sequence ID" value="AT5G51980.1"/>
    <property type="gene ID" value="AT5G51980"/>
</dbReference>
<dbReference type="Gramene" id="AT5G51980.2">
    <molecule id="Q9FNZ1-2"/>
    <property type="protein sequence ID" value="AT5G51980.2"/>
    <property type="gene ID" value="AT5G51980"/>
</dbReference>
<dbReference type="KEGG" id="ath:AT5G51980"/>
<dbReference type="Araport" id="AT5G51980"/>
<dbReference type="TAIR" id="AT5G51980"/>
<dbReference type="eggNOG" id="KOG0274">
    <property type="taxonomic scope" value="Eukaryota"/>
</dbReference>
<dbReference type="InParanoid" id="Q9FNZ1"/>
<dbReference type="OMA" id="LATYQCV"/>
<dbReference type="OrthoDB" id="19711at2759"/>
<dbReference type="PhylomeDB" id="Q9FNZ1"/>
<dbReference type="PRO" id="PR:Q9FNZ1"/>
<dbReference type="Proteomes" id="UP000006548">
    <property type="component" value="Chromosome 5"/>
</dbReference>
<dbReference type="ExpressionAtlas" id="Q9FNZ1">
    <property type="expression patterns" value="baseline and differential"/>
</dbReference>
<dbReference type="GO" id="GO:0003677">
    <property type="term" value="F:DNA binding"/>
    <property type="evidence" value="ECO:0007669"/>
    <property type="project" value="UniProtKB-KW"/>
</dbReference>
<dbReference type="GO" id="GO:0003729">
    <property type="term" value="F:mRNA binding"/>
    <property type="evidence" value="ECO:0000314"/>
    <property type="project" value="TAIR"/>
</dbReference>
<dbReference type="GO" id="GO:0008270">
    <property type="term" value="F:zinc ion binding"/>
    <property type="evidence" value="ECO:0007669"/>
    <property type="project" value="UniProtKB-KW"/>
</dbReference>
<dbReference type="FunFam" id="2.130.10.10:FF:000869">
    <property type="entry name" value="Zinc finger CCCH domain-containing protein 48"/>
    <property type="match status" value="1"/>
</dbReference>
<dbReference type="FunFam" id="2.130.10.10:FF:001235">
    <property type="entry name" value="Zinc finger CCCH domain-containing protein 48"/>
    <property type="match status" value="1"/>
</dbReference>
<dbReference type="Gene3D" id="2.130.10.10">
    <property type="entry name" value="YVTN repeat-like/Quinoprotein amine dehydrogenase"/>
    <property type="match status" value="2"/>
</dbReference>
<dbReference type="InterPro" id="IPR020472">
    <property type="entry name" value="G-protein_beta_WD-40_rep"/>
</dbReference>
<dbReference type="InterPro" id="IPR015943">
    <property type="entry name" value="WD40/YVTN_repeat-like_dom_sf"/>
</dbReference>
<dbReference type="InterPro" id="IPR036322">
    <property type="entry name" value="WD40_repeat_dom_sf"/>
</dbReference>
<dbReference type="InterPro" id="IPR001680">
    <property type="entry name" value="WD40_rpt"/>
</dbReference>
<dbReference type="InterPro" id="IPR044715">
    <property type="entry name" value="WDR86-like"/>
</dbReference>
<dbReference type="InterPro" id="IPR000571">
    <property type="entry name" value="Znf_CCCH"/>
</dbReference>
<dbReference type="InterPro" id="IPR036855">
    <property type="entry name" value="Znf_CCCH_sf"/>
</dbReference>
<dbReference type="PANTHER" id="PTHR44489">
    <property type="match status" value="1"/>
</dbReference>
<dbReference type="PANTHER" id="PTHR44489:SF1">
    <property type="entry name" value="ZINC FINGER CCCH DOMAIN-CONTAINING PROTEIN 63"/>
    <property type="match status" value="1"/>
</dbReference>
<dbReference type="Pfam" id="PF00400">
    <property type="entry name" value="WD40"/>
    <property type="match status" value="3"/>
</dbReference>
<dbReference type="Pfam" id="PF18345">
    <property type="entry name" value="zf_CCCH_4"/>
    <property type="match status" value="1"/>
</dbReference>
<dbReference type="PRINTS" id="PR00320">
    <property type="entry name" value="GPROTEINBRPT"/>
</dbReference>
<dbReference type="SMART" id="SM00320">
    <property type="entry name" value="WD40"/>
    <property type="match status" value="6"/>
</dbReference>
<dbReference type="SMART" id="SM00356">
    <property type="entry name" value="ZnF_C3H1"/>
    <property type="match status" value="2"/>
</dbReference>
<dbReference type="SUPFAM" id="SSF90229">
    <property type="entry name" value="CCCH zinc finger"/>
    <property type="match status" value="1"/>
</dbReference>
<dbReference type="SUPFAM" id="SSF50978">
    <property type="entry name" value="WD40 repeat-like"/>
    <property type="match status" value="1"/>
</dbReference>
<dbReference type="PROSITE" id="PS00678">
    <property type="entry name" value="WD_REPEATS_1"/>
    <property type="match status" value="1"/>
</dbReference>
<dbReference type="PROSITE" id="PS50082">
    <property type="entry name" value="WD_REPEATS_2"/>
    <property type="match status" value="2"/>
</dbReference>
<dbReference type="PROSITE" id="PS50294">
    <property type="entry name" value="WD_REPEATS_REGION"/>
    <property type="match status" value="1"/>
</dbReference>
<dbReference type="PROSITE" id="PS50103">
    <property type="entry name" value="ZF_C3H1"/>
    <property type="match status" value="2"/>
</dbReference>
<feature type="chain" id="PRO_0000372013" description="Zinc finger CCCH domain-containing protein 63">
    <location>
        <begin position="1"/>
        <end position="443"/>
    </location>
</feature>
<feature type="repeat" description="WD 1">
    <location>
        <begin position="149"/>
        <end position="190"/>
    </location>
</feature>
<feature type="repeat" description="WD 2">
    <location>
        <begin position="228"/>
        <end position="265"/>
    </location>
</feature>
<feature type="repeat" description="WD 3">
    <location>
        <begin position="272"/>
        <end position="311"/>
    </location>
</feature>
<feature type="repeat" description="WD 4">
    <location>
        <begin position="313"/>
        <end position="349"/>
    </location>
</feature>
<feature type="repeat" description="WD 5">
    <location>
        <begin position="354"/>
        <end position="396"/>
    </location>
</feature>
<feature type="repeat" description="WD 6">
    <location>
        <begin position="404"/>
        <end position="442"/>
    </location>
</feature>
<feature type="zinc finger region" description="C3H1-type 1" evidence="1">
    <location>
        <begin position="30"/>
        <end position="56"/>
    </location>
</feature>
<feature type="zinc finger region" description="C3H1-type 2" evidence="1">
    <location>
        <begin position="109"/>
        <end position="136"/>
    </location>
</feature>
<feature type="region of interest" description="Disordered" evidence="2">
    <location>
        <begin position="1"/>
        <end position="29"/>
    </location>
</feature>
<feature type="region of interest" description="Disordered" evidence="2">
    <location>
        <begin position="56"/>
        <end position="99"/>
    </location>
</feature>
<feature type="splice variant" id="VSP_037130" description="In isoform 2." evidence="3">
    <location>
        <begin position="391"/>
        <end position="396"/>
    </location>
</feature>
<reference key="1">
    <citation type="journal article" date="2000" name="Gene">
        <title>ZFWD: a novel subfamily of plant proteins containing a C3H zinc finger and seven WD40 repeats.</title>
        <authorList>
            <person name="Terol J."/>
            <person name="Bargues M."/>
            <person name="Perez-Alonso M."/>
        </authorList>
    </citation>
    <scope>NUCLEOTIDE SEQUENCE [MRNA] (ISOFORM 1)</scope>
    <source>
        <strain>cv. Columbia</strain>
    </source>
</reference>
<reference key="2">
    <citation type="journal article" date="1998" name="DNA Res.">
        <title>Structural analysis of Arabidopsis thaliana chromosome 5. VII. Sequence features of the regions of 1,013,767 bp covered by sixteen physically assigned P1 and TAC clones.</title>
        <authorList>
            <person name="Nakamura Y."/>
            <person name="Sato S."/>
            <person name="Asamizu E."/>
            <person name="Kaneko T."/>
            <person name="Kotani H."/>
            <person name="Miyajima N."/>
            <person name="Tabata S."/>
        </authorList>
    </citation>
    <scope>NUCLEOTIDE SEQUENCE [LARGE SCALE GENOMIC DNA]</scope>
    <source>
        <strain>cv. Columbia</strain>
    </source>
</reference>
<reference key="3">
    <citation type="journal article" date="2017" name="Plant J.">
        <title>Araport11: a complete reannotation of the Arabidopsis thaliana reference genome.</title>
        <authorList>
            <person name="Cheng C.Y."/>
            <person name="Krishnakumar V."/>
            <person name="Chan A.P."/>
            <person name="Thibaud-Nissen F."/>
            <person name="Schobel S."/>
            <person name="Town C.D."/>
        </authorList>
    </citation>
    <scope>GENOME REANNOTATION</scope>
    <source>
        <strain>cv. Columbia</strain>
    </source>
</reference>
<reference key="4">
    <citation type="journal article" date="2004" name="Genome Res.">
        <title>Whole genome sequence comparisons and 'full-length' cDNA sequences: a combined approach to evaluate and improve Arabidopsis genome annotation.</title>
        <authorList>
            <person name="Castelli V."/>
            <person name="Aury J.-M."/>
            <person name="Jaillon O."/>
            <person name="Wincker P."/>
            <person name="Clepet C."/>
            <person name="Menard M."/>
            <person name="Cruaud C."/>
            <person name="Quetier F."/>
            <person name="Scarpelli C."/>
            <person name="Schaechter V."/>
            <person name="Temple G."/>
            <person name="Caboche M."/>
            <person name="Weissenbach J."/>
            <person name="Salanoubat M."/>
        </authorList>
    </citation>
    <scope>NUCLEOTIDE SEQUENCE [LARGE SCALE MRNA] (ISOFORM 2)</scope>
    <source>
        <strain>cv. Columbia</strain>
    </source>
</reference>
<reference key="5">
    <citation type="journal article" date="2008" name="BMC Genomics">
        <title>Genome-wide analysis of CCCH zinc finger family in Arabidopsis and rice.</title>
        <authorList>
            <person name="Wang D."/>
            <person name="Guo Y."/>
            <person name="Wu C."/>
            <person name="Yang G."/>
            <person name="Li Y."/>
            <person name="Zheng C."/>
        </authorList>
    </citation>
    <scope>NOMENCLATURE</scope>
</reference>
<proteinExistence type="evidence at transcript level"/>
<evidence type="ECO:0000255" key="1">
    <source>
        <dbReference type="PROSITE-ProRule" id="PRU00723"/>
    </source>
</evidence>
<evidence type="ECO:0000256" key="2">
    <source>
        <dbReference type="SAM" id="MobiDB-lite"/>
    </source>
</evidence>
<evidence type="ECO:0000303" key="3">
    <source>
    </source>
</evidence>
<evidence type="ECO:0000305" key="4"/>
<keyword id="KW-0025">Alternative splicing</keyword>
<keyword id="KW-0238">DNA-binding</keyword>
<keyword id="KW-0479">Metal-binding</keyword>
<keyword id="KW-1185">Reference proteome</keyword>
<keyword id="KW-0677">Repeat</keyword>
<keyword id="KW-0853">WD repeat</keyword>
<keyword id="KW-0862">Zinc</keyword>
<keyword id="KW-0863">Zinc-finger</keyword>
<name>C3H63_ARATH</name>
<gene>
    <name type="primary">ZFWD2</name>
    <name type="ordered locus">At5g51980</name>
    <name type="ORF">MSG15.6</name>
</gene>
<sequence length="443" mass="47987">MDFDLNGGNKRVFNRLGGGGGSTRPMAPTDTRQKVCFHWRAGRCNRSPCPYLHRELPGPGPGQGQGPGYTNKRVAEESGFAGPSHRRGPGFNGNSSSSWGRFGGNRTVTKTEKVCNFWVDGNCTYGDKCRYLHCWSKGESFALLTQLDGHEKLVSGIALPSGSDKLYTGSKDETLRVWDCASGQCTGVLKLGGEIGCVLSEGPWLLVGMPNLVKAWNIETNADQSLSGPVGQVYSLVVGTDLLFAGTQDGSILAWRYNAATNCFEPSASLTGHTLAVVTLYVGANRLYSGSMDKTIKVWSLDNLQCIQTLTDHSSVVMSLICWDQFLLSCSLDNTVKIWAAIEGGNLEVTYTHKEEHGVLALCGVHDAEAKPVLLCACNDNTLRLYDLPSLGLFIRFTERGKIFAKQEIRAIQIGPGGIFFTGDGTGQVKVWKWCTEPTAALP</sequence>
<comment type="alternative products">
    <event type="alternative splicing"/>
    <isoform>
        <id>Q9FNZ1-1</id>
        <name>1</name>
        <sequence type="displayed"/>
    </isoform>
    <isoform>
        <id>Q9FNZ1-2</id>
        <name>2</name>
        <sequence type="described" ref="VSP_037130"/>
    </isoform>
</comment>
<comment type="miscellaneous">
    <molecule>Isoform 2</molecule>
    <text evidence="4">May be due to a competing acceptor splice site.</text>
</comment>
<comment type="sequence caution" evidence="4">
    <molecule>Isoform 2</molecule>
    <conflict type="frameshift">
        <sequence resource="EMBL" id="BX831861"/>
    </conflict>
</comment>
<organism>
    <name type="scientific">Arabidopsis thaliana</name>
    <name type="common">Mouse-ear cress</name>
    <dbReference type="NCBI Taxonomy" id="3702"/>
    <lineage>
        <taxon>Eukaryota</taxon>
        <taxon>Viridiplantae</taxon>
        <taxon>Streptophyta</taxon>
        <taxon>Embryophyta</taxon>
        <taxon>Tracheophyta</taxon>
        <taxon>Spermatophyta</taxon>
        <taxon>Magnoliopsida</taxon>
        <taxon>eudicotyledons</taxon>
        <taxon>Gunneridae</taxon>
        <taxon>Pentapetalae</taxon>
        <taxon>rosids</taxon>
        <taxon>malvids</taxon>
        <taxon>Brassicales</taxon>
        <taxon>Brassicaceae</taxon>
        <taxon>Camelineae</taxon>
        <taxon>Arabidopsis</taxon>
    </lineage>
</organism>
<accession>Q9FNZ1</accession>
<accession>Q9FJ94</accession>
<protein>
    <recommendedName>
        <fullName>Zinc finger CCCH domain-containing protein 63</fullName>
        <shortName>AtC3H63</shortName>
    </recommendedName>
    <alternativeName>
        <fullName>Zinc finger CCCH domain and WD40 repeat-containing protein 2</fullName>
    </alternativeName>
</protein>